<protein>
    <recommendedName>
        <fullName evidence="1">Xylose import ATP-binding protein XylG</fullName>
        <ecNumber evidence="1">7.5.2.10</ecNumber>
    </recommendedName>
</protein>
<feature type="chain" id="PRO_0000271504" description="Xylose import ATP-binding protein XylG">
    <location>
        <begin position="1"/>
        <end position="513"/>
    </location>
</feature>
<feature type="domain" description="ABC transporter 1" evidence="1">
    <location>
        <begin position="5"/>
        <end position="242"/>
    </location>
</feature>
<feature type="domain" description="ABC transporter 2" evidence="1">
    <location>
        <begin position="259"/>
        <end position="505"/>
    </location>
</feature>
<feature type="binding site" evidence="1">
    <location>
        <begin position="37"/>
        <end position="44"/>
    </location>
    <ligand>
        <name>ATP</name>
        <dbReference type="ChEBI" id="CHEBI:30616"/>
    </ligand>
</feature>
<proteinExistence type="inferred from homology"/>
<keyword id="KW-0067">ATP-binding</keyword>
<keyword id="KW-0997">Cell inner membrane</keyword>
<keyword id="KW-1003">Cell membrane</keyword>
<keyword id="KW-0472">Membrane</keyword>
<keyword id="KW-0547">Nucleotide-binding</keyword>
<keyword id="KW-0677">Repeat</keyword>
<keyword id="KW-0762">Sugar transport</keyword>
<keyword id="KW-1278">Translocase</keyword>
<keyword id="KW-0813">Transport</keyword>
<comment type="function">
    <text evidence="1">Part of the ABC transporter complex XylFGH involved in xylose import. Responsible for energy coupling to the transport system.</text>
</comment>
<comment type="catalytic activity">
    <reaction evidence="1">
        <text>D-xylose(out) + ATP + H2O = D-xylose(in) + ADP + phosphate + H(+)</text>
        <dbReference type="Rhea" id="RHEA:29899"/>
        <dbReference type="ChEBI" id="CHEBI:15377"/>
        <dbReference type="ChEBI" id="CHEBI:15378"/>
        <dbReference type="ChEBI" id="CHEBI:30616"/>
        <dbReference type="ChEBI" id="CHEBI:43474"/>
        <dbReference type="ChEBI" id="CHEBI:53455"/>
        <dbReference type="ChEBI" id="CHEBI:456216"/>
        <dbReference type="EC" id="7.5.2.10"/>
    </reaction>
</comment>
<comment type="subunit">
    <text evidence="1">The complex is composed of two ATP-binding proteins (XylG), two transmembrane proteins (XylH) and a solute-binding protein (XylF).</text>
</comment>
<comment type="subcellular location">
    <subcellularLocation>
        <location evidence="1">Cell inner membrane</location>
        <topology evidence="1">Peripheral membrane protein</topology>
    </subcellularLocation>
</comment>
<comment type="similarity">
    <text evidence="1">Belongs to the ABC transporter superfamily. Xylose importer (TC 3.A.1.2.4) family.</text>
</comment>
<comment type="sequence caution" evidence="2">
    <conflict type="erroneous initiation">
        <sequence resource="EMBL-CDS" id="ABG71644"/>
    </conflict>
</comment>
<gene>
    <name evidence="1" type="primary">xylG</name>
    <name type="ordered locus">ECP_3670</name>
</gene>
<evidence type="ECO:0000255" key="1">
    <source>
        <dbReference type="HAMAP-Rule" id="MF_01722"/>
    </source>
</evidence>
<evidence type="ECO:0000305" key="2"/>
<organism>
    <name type="scientific">Escherichia coli O6:K15:H31 (strain 536 / UPEC)</name>
    <dbReference type="NCBI Taxonomy" id="362663"/>
    <lineage>
        <taxon>Bacteria</taxon>
        <taxon>Pseudomonadati</taxon>
        <taxon>Pseudomonadota</taxon>
        <taxon>Gammaproteobacteria</taxon>
        <taxon>Enterobacterales</taxon>
        <taxon>Enterobacteriaceae</taxon>
        <taxon>Escherichia</taxon>
    </lineage>
</organism>
<accession>Q0TBN5</accession>
<reference key="1">
    <citation type="journal article" date="2006" name="Mol. Microbiol.">
        <title>Role of pathogenicity island-associated integrases in the genome plasticity of uropathogenic Escherichia coli strain 536.</title>
        <authorList>
            <person name="Hochhut B."/>
            <person name="Wilde C."/>
            <person name="Balling G."/>
            <person name="Middendorf B."/>
            <person name="Dobrindt U."/>
            <person name="Brzuszkiewicz E."/>
            <person name="Gottschalk G."/>
            <person name="Carniel E."/>
            <person name="Hacker J."/>
        </authorList>
    </citation>
    <scope>NUCLEOTIDE SEQUENCE [LARGE SCALE GENOMIC DNA]</scope>
    <source>
        <strain>536 / UPEC</strain>
    </source>
</reference>
<sequence length="513" mass="56484">MPYLLEMKNITKTFGSVKAIDNVSLRLNAGEIVSLCGENGSGKSTLMKVLCGIYPHGSYEGEIIFAGEEIQASHIRDTERKGIAIIHQELALVKELTVLENIFLGNEITHNGIMDYDLMTLRCQKLLAQVSLSISPDTRVGDLGLGQQQLVEIAKALNKQVRLLILDEPTASLTEQETSVLLDIIRDLQQHGIACIYISHKLNEVKAISDTICVIRDGQHIGTRDAAGMSEDDIITMMVGRELTALYPNEPHTTGDEILRIEHLTAWHPVNRHIKRVNDVSFSLKRGEILGIAGLVGAGRTETIQCLFGVWPGQWEGKIYIDGKQVDIRNCQQAIAQGIAMVPEDRKRDGIVPVMAVGKNITLAALKKFTGSISQLDDAAEQKCILESIQQLKVKTSSPDLAIGRLSGGNQQKAILARCLLLNPRILILDEPTRGIDIGAKYEIYKLINQLVQQGIAVIVISSELPEVLGLSDRVLVMHEGKLKANLINHNLTQEQVMEAALRSEHHVEKQSV</sequence>
<dbReference type="EC" id="7.5.2.10" evidence="1"/>
<dbReference type="EMBL" id="CP000247">
    <property type="protein sequence ID" value="ABG71644.1"/>
    <property type="status" value="ALT_INIT"/>
    <property type="molecule type" value="Genomic_DNA"/>
</dbReference>
<dbReference type="RefSeq" id="WP_001146503.1">
    <property type="nucleotide sequence ID" value="NC_008253.1"/>
</dbReference>
<dbReference type="SMR" id="Q0TBN5"/>
<dbReference type="KEGG" id="ecp:ECP_3670"/>
<dbReference type="HOGENOM" id="CLU_000604_92_3_6"/>
<dbReference type="Proteomes" id="UP000009182">
    <property type="component" value="Chromosome"/>
</dbReference>
<dbReference type="GO" id="GO:0005886">
    <property type="term" value="C:plasma membrane"/>
    <property type="evidence" value="ECO:0007669"/>
    <property type="project" value="UniProtKB-SubCell"/>
</dbReference>
<dbReference type="GO" id="GO:0015614">
    <property type="term" value="F:ABC-type D-xylose transporter activity"/>
    <property type="evidence" value="ECO:0007669"/>
    <property type="project" value="UniProtKB-EC"/>
</dbReference>
<dbReference type="GO" id="GO:0005524">
    <property type="term" value="F:ATP binding"/>
    <property type="evidence" value="ECO:0007669"/>
    <property type="project" value="UniProtKB-KW"/>
</dbReference>
<dbReference type="GO" id="GO:0016887">
    <property type="term" value="F:ATP hydrolysis activity"/>
    <property type="evidence" value="ECO:0007669"/>
    <property type="project" value="InterPro"/>
</dbReference>
<dbReference type="CDD" id="cd03216">
    <property type="entry name" value="ABC_Carb_Monos_I"/>
    <property type="match status" value="1"/>
</dbReference>
<dbReference type="CDD" id="cd03215">
    <property type="entry name" value="ABC_Carb_Monos_II"/>
    <property type="match status" value="1"/>
</dbReference>
<dbReference type="FunFam" id="3.40.50.300:FF:000126">
    <property type="entry name" value="Galactose/methyl galactoside import ATP-binding protein MglA"/>
    <property type="match status" value="1"/>
</dbReference>
<dbReference type="FunFam" id="3.40.50.300:FF:000127">
    <property type="entry name" value="Ribose import ATP-binding protein RbsA"/>
    <property type="match status" value="1"/>
</dbReference>
<dbReference type="Gene3D" id="3.40.50.300">
    <property type="entry name" value="P-loop containing nucleotide triphosphate hydrolases"/>
    <property type="match status" value="2"/>
</dbReference>
<dbReference type="InterPro" id="IPR003593">
    <property type="entry name" value="AAA+_ATPase"/>
</dbReference>
<dbReference type="InterPro" id="IPR050107">
    <property type="entry name" value="ABC_carbohydrate_import_ATPase"/>
</dbReference>
<dbReference type="InterPro" id="IPR003439">
    <property type="entry name" value="ABC_transporter-like_ATP-bd"/>
</dbReference>
<dbReference type="InterPro" id="IPR017871">
    <property type="entry name" value="ABC_transporter-like_CS"/>
</dbReference>
<dbReference type="InterPro" id="IPR013455">
    <property type="entry name" value="ABC_transptr_XylG"/>
</dbReference>
<dbReference type="InterPro" id="IPR027417">
    <property type="entry name" value="P-loop_NTPase"/>
</dbReference>
<dbReference type="NCBIfam" id="NF010069">
    <property type="entry name" value="PRK13549.1"/>
    <property type="match status" value="1"/>
</dbReference>
<dbReference type="NCBIfam" id="TIGR02633">
    <property type="entry name" value="xylG"/>
    <property type="match status" value="1"/>
</dbReference>
<dbReference type="PANTHER" id="PTHR43790">
    <property type="entry name" value="CARBOHYDRATE TRANSPORT ATP-BINDING PROTEIN MG119-RELATED"/>
    <property type="match status" value="1"/>
</dbReference>
<dbReference type="PANTHER" id="PTHR43790:SF1">
    <property type="entry name" value="XYLOSE IMPORT ATP-BINDING PROTEIN XYLG"/>
    <property type="match status" value="1"/>
</dbReference>
<dbReference type="Pfam" id="PF00005">
    <property type="entry name" value="ABC_tran"/>
    <property type="match status" value="2"/>
</dbReference>
<dbReference type="SMART" id="SM00382">
    <property type="entry name" value="AAA"/>
    <property type="match status" value="2"/>
</dbReference>
<dbReference type="SUPFAM" id="SSF52540">
    <property type="entry name" value="P-loop containing nucleoside triphosphate hydrolases"/>
    <property type="match status" value="2"/>
</dbReference>
<dbReference type="PROSITE" id="PS00211">
    <property type="entry name" value="ABC_TRANSPORTER_1"/>
    <property type="match status" value="1"/>
</dbReference>
<dbReference type="PROSITE" id="PS50893">
    <property type="entry name" value="ABC_TRANSPORTER_2"/>
    <property type="match status" value="2"/>
</dbReference>
<dbReference type="PROSITE" id="PS51280">
    <property type="entry name" value="XYLG"/>
    <property type="match status" value="1"/>
</dbReference>
<name>XYLG_ECOL5</name>